<keyword id="KW-0520">NAD</keyword>
<keyword id="KW-0560">Oxidoreductase</keyword>
<keyword id="KW-0816">Tricarboxylic acid cycle</keyword>
<dbReference type="EC" id="1.1.1.37" evidence="1"/>
<dbReference type="EMBL" id="CP000848">
    <property type="protein sequence ID" value="ABV76127.1"/>
    <property type="molecule type" value="Genomic_DNA"/>
</dbReference>
<dbReference type="RefSeq" id="WP_012150717.1">
    <property type="nucleotide sequence ID" value="NZ_CP121767.1"/>
</dbReference>
<dbReference type="SMR" id="A8GRV2"/>
<dbReference type="GeneID" id="79937275"/>
<dbReference type="KEGG" id="rri:A1G_02950"/>
<dbReference type="HOGENOM" id="CLU_045401_2_1_5"/>
<dbReference type="Proteomes" id="UP000006832">
    <property type="component" value="Chromosome"/>
</dbReference>
<dbReference type="GO" id="GO:0004459">
    <property type="term" value="F:L-lactate dehydrogenase activity"/>
    <property type="evidence" value="ECO:0007669"/>
    <property type="project" value="TreeGrafter"/>
</dbReference>
<dbReference type="GO" id="GO:0030060">
    <property type="term" value="F:L-malate dehydrogenase (NAD+) activity"/>
    <property type="evidence" value="ECO:0007669"/>
    <property type="project" value="UniProtKB-UniRule"/>
</dbReference>
<dbReference type="GO" id="GO:0006089">
    <property type="term" value="P:lactate metabolic process"/>
    <property type="evidence" value="ECO:0007669"/>
    <property type="project" value="TreeGrafter"/>
</dbReference>
<dbReference type="GO" id="GO:0006099">
    <property type="term" value="P:tricarboxylic acid cycle"/>
    <property type="evidence" value="ECO:0007669"/>
    <property type="project" value="UniProtKB-UniRule"/>
</dbReference>
<dbReference type="CDD" id="cd01339">
    <property type="entry name" value="LDH-like_MDH"/>
    <property type="match status" value="1"/>
</dbReference>
<dbReference type="FunFam" id="3.40.50.720:FF:000018">
    <property type="entry name" value="Malate dehydrogenase"/>
    <property type="match status" value="1"/>
</dbReference>
<dbReference type="FunFam" id="3.90.110.10:FF:000004">
    <property type="entry name" value="Malate dehydrogenase"/>
    <property type="match status" value="1"/>
</dbReference>
<dbReference type="Gene3D" id="3.90.110.10">
    <property type="entry name" value="Lactate dehydrogenase/glycoside hydrolase, family 4, C-terminal"/>
    <property type="match status" value="1"/>
</dbReference>
<dbReference type="Gene3D" id="3.40.50.720">
    <property type="entry name" value="NAD(P)-binding Rossmann-like Domain"/>
    <property type="match status" value="1"/>
</dbReference>
<dbReference type="HAMAP" id="MF_00487">
    <property type="entry name" value="Malate_dehydrog_3"/>
    <property type="match status" value="1"/>
</dbReference>
<dbReference type="InterPro" id="IPR001557">
    <property type="entry name" value="L-lactate/malate_DH"/>
</dbReference>
<dbReference type="InterPro" id="IPR022383">
    <property type="entry name" value="Lactate/malate_DH_C"/>
</dbReference>
<dbReference type="InterPro" id="IPR001236">
    <property type="entry name" value="Lactate/malate_DH_N"/>
</dbReference>
<dbReference type="InterPro" id="IPR015955">
    <property type="entry name" value="Lactate_DH/Glyco_Ohase_4_C"/>
</dbReference>
<dbReference type="InterPro" id="IPR011275">
    <property type="entry name" value="Malate_DH_type3"/>
</dbReference>
<dbReference type="InterPro" id="IPR036291">
    <property type="entry name" value="NAD(P)-bd_dom_sf"/>
</dbReference>
<dbReference type="NCBIfam" id="TIGR01763">
    <property type="entry name" value="MalateDH_bact"/>
    <property type="match status" value="1"/>
</dbReference>
<dbReference type="NCBIfam" id="NF004863">
    <property type="entry name" value="PRK06223.1"/>
    <property type="match status" value="1"/>
</dbReference>
<dbReference type="PANTHER" id="PTHR43128">
    <property type="entry name" value="L-2-HYDROXYCARBOXYLATE DEHYDROGENASE (NAD(P)(+))"/>
    <property type="match status" value="1"/>
</dbReference>
<dbReference type="PANTHER" id="PTHR43128:SF16">
    <property type="entry name" value="L-LACTATE DEHYDROGENASE"/>
    <property type="match status" value="1"/>
</dbReference>
<dbReference type="Pfam" id="PF02866">
    <property type="entry name" value="Ldh_1_C"/>
    <property type="match status" value="1"/>
</dbReference>
<dbReference type="Pfam" id="PF00056">
    <property type="entry name" value="Ldh_1_N"/>
    <property type="match status" value="1"/>
</dbReference>
<dbReference type="PIRSF" id="PIRSF000102">
    <property type="entry name" value="Lac_mal_DH"/>
    <property type="match status" value="1"/>
</dbReference>
<dbReference type="PRINTS" id="PR00086">
    <property type="entry name" value="LLDHDRGNASE"/>
</dbReference>
<dbReference type="SUPFAM" id="SSF56327">
    <property type="entry name" value="LDH C-terminal domain-like"/>
    <property type="match status" value="1"/>
</dbReference>
<dbReference type="SUPFAM" id="SSF51735">
    <property type="entry name" value="NAD(P)-binding Rossmann-fold domains"/>
    <property type="match status" value="1"/>
</dbReference>
<sequence>MKQHPKISLIGSGNIGGTLAHLISLRELGNIVLFDVTEGVPQGKALDLMQAVTIAGSDIKIKGTNDYKDIKGSDAIIITAGLPRKPGMSRDDLISINTGIMKTVAANVKKYAPDAFVIVITNPLDVMVYVMLKESGLPHNKVIGMAGVLDSSRFNLFLAEEFKVSVSNVNSMVLGGHGDAMVPLARYSTISGVPIPDLIKMGLSSNENIEKIIDRTRNGGGEIVALLKTGSAYYAPAASAIEMLESYLKDKRQILTCAAYLQGEYGVHDLYVGVPIMIGKEGVLKVIELQLTTEEKALFDKSVEGVKKLIETIK</sequence>
<protein>
    <recommendedName>
        <fullName evidence="1">Malate dehydrogenase</fullName>
        <ecNumber evidence="1">1.1.1.37</ecNumber>
    </recommendedName>
</protein>
<gene>
    <name evidence="1" type="primary">mdh</name>
    <name type="ordered locus">A1G_02950</name>
</gene>
<proteinExistence type="inferred from homology"/>
<comment type="function">
    <text evidence="1">Catalyzes the reversible oxidation of malate to oxaloacetate.</text>
</comment>
<comment type="catalytic activity">
    <reaction evidence="1">
        <text>(S)-malate + NAD(+) = oxaloacetate + NADH + H(+)</text>
        <dbReference type="Rhea" id="RHEA:21432"/>
        <dbReference type="ChEBI" id="CHEBI:15378"/>
        <dbReference type="ChEBI" id="CHEBI:15589"/>
        <dbReference type="ChEBI" id="CHEBI:16452"/>
        <dbReference type="ChEBI" id="CHEBI:57540"/>
        <dbReference type="ChEBI" id="CHEBI:57945"/>
        <dbReference type="EC" id="1.1.1.37"/>
    </reaction>
</comment>
<comment type="similarity">
    <text evidence="1">Belongs to the LDH/MDH superfamily. MDH type 3 family.</text>
</comment>
<name>MDH_RICRS</name>
<evidence type="ECO:0000255" key="1">
    <source>
        <dbReference type="HAMAP-Rule" id="MF_00487"/>
    </source>
</evidence>
<organism>
    <name type="scientific">Rickettsia rickettsii (strain Sheila Smith)</name>
    <dbReference type="NCBI Taxonomy" id="392021"/>
    <lineage>
        <taxon>Bacteria</taxon>
        <taxon>Pseudomonadati</taxon>
        <taxon>Pseudomonadota</taxon>
        <taxon>Alphaproteobacteria</taxon>
        <taxon>Rickettsiales</taxon>
        <taxon>Rickettsiaceae</taxon>
        <taxon>Rickettsieae</taxon>
        <taxon>Rickettsia</taxon>
        <taxon>spotted fever group</taxon>
    </lineage>
</organism>
<reference key="1">
    <citation type="submission" date="2007-09" db="EMBL/GenBank/DDBJ databases">
        <title>Complete genome sequence of Rickettsia rickettsii.</title>
        <authorList>
            <person name="Madan A."/>
            <person name="Fahey J."/>
            <person name="Helton E."/>
            <person name="Ketteman M."/>
            <person name="Madan A."/>
            <person name="Rodrigues S."/>
            <person name="Sanchez A."/>
            <person name="Dasch G."/>
            <person name="Eremeeva M."/>
        </authorList>
    </citation>
    <scope>NUCLEOTIDE SEQUENCE [LARGE SCALE GENOMIC DNA]</scope>
    <source>
        <strain>Sheila Smith</strain>
    </source>
</reference>
<accession>A8GRV2</accession>
<feature type="chain" id="PRO_1000026491" description="Malate dehydrogenase">
    <location>
        <begin position="1"/>
        <end position="314"/>
    </location>
</feature>
<feature type="active site" description="Proton acceptor" evidence="1">
    <location>
        <position position="177"/>
    </location>
</feature>
<feature type="binding site" evidence="1">
    <location>
        <begin position="11"/>
        <end position="16"/>
    </location>
    <ligand>
        <name>NAD(+)</name>
        <dbReference type="ChEBI" id="CHEBI:57540"/>
    </ligand>
</feature>
<feature type="binding site" evidence="1">
    <location>
        <position position="35"/>
    </location>
    <ligand>
        <name>NAD(+)</name>
        <dbReference type="ChEBI" id="CHEBI:57540"/>
    </ligand>
</feature>
<feature type="binding site" evidence="1">
    <location>
        <position position="84"/>
    </location>
    <ligand>
        <name>substrate</name>
    </ligand>
</feature>
<feature type="binding site" evidence="1">
    <location>
        <position position="90"/>
    </location>
    <ligand>
        <name>substrate</name>
    </ligand>
</feature>
<feature type="binding site" evidence="1">
    <location>
        <position position="97"/>
    </location>
    <ligand>
        <name>NAD(+)</name>
        <dbReference type="ChEBI" id="CHEBI:57540"/>
    </ligand>
</feature>
<feature type="binding site" evidence="1">
    <location>
        <begin position="120"/>
        <end position="122"/>
    </location>
    <ligand>
        <name>NAD(+)</name>
        <dbReference type="ChEBI" id="CHEBI:57540"/>
    </ligand>
</feature>
<feature type="binding site" evidence="1">
    <location>
        <position position="122"/>
    </location>
    <ligand>
        <name>substrate</name>
    </ligand>
</feature>
<feature type="binding site" evidence="1">
    <location>
        <position position="153"/>
    </location>
    <ligand>
        <name>substrate</name>
    </ligand>
</feature>